<name>FMT_GLAP5</name>
<gene>
    <name evidence="1" type="primary">fmt</name>
    <name type="ordered locus">HAPS_1910</name>
</gene>
<dbReference type="EC" id="2.1.2.9" evidence="1"/>
<dbReference type="EMBL" id="CP001321">
    <property type="protein sequence ID" value="ACL33398.1"/>
    <property type="molecule type" value="Genomic_DNA"/>
</dbReference>
<dbReference type="RefSeq" id="WP_015939970.1">
    <property type="nucleotide sequence ID" value="NC_011852.1"/>
</dbReference>
<dbReference type="SMR" id="B8F7U6"/>
<dbReference type="STRING" id="557723.HAPS_1910"/>
<dbReference type="KEGG" id="hap:HAPS_1910"/>
<dbReference type="PATRIC" id="fig|557723.8.peg.1895"/>
<dbReference type="HOGENOM" id="CLU_033347_1_2_6"/>
<dbReference type="Proteomes" id="UP000006743">
    <property type="component" value="Chromosome"/>
</dbReference>
<dbReference type="GO" id="GO:0005829">
    <property type="term" value="C:cytosol"/>
    <property type="evidence" value="ECO:0007669"/>
    <property type="project" value="TreeGrafter"/>
</dbReference>
<dbReference type="GO" id="GO:0004479">
    <property type="term" value="F:methionyl-tRNA formyltransferase activity"/>
    <property type="evidence" value="ECO:0007669"/>
    <property type="project" value="UniProtKB-UniRule"/>
</dbReference>
<dbReference type="CDD" id="cd08646">
    <property type="entry name" value="FMT_core_Met-tRNA-FMT_N"/>
    <property type="match status" value="1"/>
</dbReference>
<dbReference type="CDD" id="cd08704">
    <property type="entry name" value="Met_tRNA_FMT_C"/>
    <property type="match status" value="1"/>
</dbReference>
<dbReference type="FunFam" id="3.40.50.170:FF:000003">
    <property type="entry name" value="Methionyl-tRNA formyltransferase"/>
    <property type="match status" value="1"/>
</dbReference>
<dbReference type="Gene3D" id="3.10.25.10">
    <property type="entry name" value="Formyl transferase, C-terminal domain"/>
    <property type="match status" value="1"/>
</dbReference>
<dbReference type="Gene3D" id="3.40.50.170">
    <property type="entry name" value="Formyl transferase, N-terminal domain"/>
    <property type="match status" value="1"/>
</dbReference>
<dbReference type="HAMAP" id="MF_00182">
    <property type="entry name" value="Formyl_trans"/>
    <property type="match status" value="1"/>
</dbReference>
<dbReference type="InterPro" id="IPR005794">
    <property type="entry name" value="Fmt"/>
</dbReference>
<dbReference type="InterPro" id="IPR005793">
    <property type="entry name" value="Formyl_trans_C"/>
</dbReference>
<dbReference type="InterPro" id="IPR037022">
    <property type="entry name" value="Formyl_trans_C_sf"/>
</dbReference>
<dbReference type="InterPro" id="IPR002376">
    <property type="entry name" value="Formyl_transf_N"/>
</dbReference>
<dbReference type="InterPro" id="IPR036477">
    <property type="entry name" value="Formyl_transf_N_sf"/>
</dbReference>
<dbReference type="InterPro" id="IPR011034">
    <property type="entry name" value="Formyl_transferase-like_C_sf"/>
</dbReference>
<dbReference type="InterPro" id="IPR001555">
    <property type="entry name" value="GART_AS"/>
</dbReference>
<dbReference type="InterPro" id="IPR044135">
    <property type="entry name" value="Met-tRNA-FMT_C"/>
</dbReference>
<dbReference type="InterPro" id="IPR041711">
    <property type="entry name" value="Met-tRNA-FMT_N"/>
</dbReference>
<dbReference type="NCBIfam" id="TIGR00460">
    <property type="entry name" value="fmt"/>
    <property type="match status" value="1"/>
</dbReference>
<dbReference type="PANTHER" id="PTHR11138">
    <property type="entry name" value="METHIONYL-TRNA FORMYLTRANSFERASE"/>
    <property type="match status" value="1"/>
</dbReference>
<dbReference type="PANTHER" id="PTHR11138:SF5">
    <property type="entry name" value="METHIONYL-TRNA FORMYLTRANSFERASE, MITOCHONDRIAL"/>
    <property type="match status" value="1"/>
</dbReference>
<dbReference type="Pfam" id="PF02911">
    <property type="entry name" value="Formyl_trans_C"/>
    <property type="match status" value="1"/>
</dbReference>
<dbReference type="Pfam" id="PF00551">
    <property type="entry name" value="Formyl_trans_N"/>
    <property type="match status" value="1"/>
</dbReference>
<dbReference type="SUPFAM" id="SSF50486">
    <property type="entry name" value="FMT C-terminal domain-like"/>
    <property type="match status" value="1"/>
</dbReference>
<dbReference type="SUPFAM" id="SSF53328">
    <property type="entry name" value="Formyltransferase"/>
    <property type="match status" value="1"/>
</dbReference>
<dbReference type="PROSITE" id="PS00373">
    <property type="entry name" value="GART"/>
    <property type="match status" value="1"/>
</dbReference>
<organism>
    <name type="scientific">Glaesserella parasuis serovar 5 (strain SH0165)</name>
    <name type="common">Haemophilus parasuis</name>
    <dbReference type="NCBI Taxonomy" id="557723"/>
    <lineage>
        <taxon>Bacteria</taxon>
        <taxon>Pseudomonadati</taxon>
        <taxon>Pseudomonadota</taxon>
        <taxon>Gammaproteobacteria</taxon>
        <taxon>Pasteurellales</taxon>
        <taxon>Pasteurellaceae</taxon>
        <taxon>Glaesserella</taxon>
    </lineage>
</organism>
<sequence>MKKLNIIFAGTPDFAATHLQALLNSEHNVIAVYTQPDKPAGRGKKLQASPVKQLAEVHHIPVYQPKSLRKEEAQAELQALNADVMVVVAYGLILPEAVLKAPKYGCLNVHGSLLPRWRGAAPIQRSIWAGDTETGVTIMQMDIGLDTGDMLHKVTTPILATETSASLYAKLAELAPPALLEVLNGLTSGQFKPEKQQDEQANYAEKLTKEEAKLDWNMTACQLERNIRAFNPAPMAYLTLMVNEVEERIKVYQAEVLPHQEKTVGTVLAVDKNGIQIATQQGVLNITQLQPAGKKPMSVQDFLNGRGDWFKVGSVL</sequence>
<feature type="chain" id="PRO_1000190027" description="Methionyl-tRNA formyltransferase">
    <location>
        <begin position="1"/>
        <end position="316"/>
    </location>
</feature>
<feature type="binding site" evidence="1">
    <location>
        <begin position="112"/>
        <end position="115"/>
    </location>
    <ligand>
        <name>(6S)-5,6,7,8-tetrahydrofolate</name>
        <dbReference type="ChEBI" id="CHEBI:57453"/>
    </ligand>
</feature>
<protein>
    <recommendedName>
        <fullName evidence="1">Methionyl-tRNA formyltransferase</fullName>
        <ecNumber evidence="1">2.1.2.9</ecNumber>
    </recommendedName>
</protein>
<keyword id="KW-0648">Protein biosynthesis</keyword>
<keyword id="KW-1185">Reference proteome</keyword>
<keyword id="KW-0808">Transferase</keyword>
<proteinExistence type="inferred from homology"/>
<reference key="1">
    <citation type="journal article" date="2009" name="J. Bacteriol.">
        <title>Complete genome sequence of Haemophilus parasuis SH0165.</title>
        <authorList>
            <person name="Yue M."/>
            <person name="Yang F."/>
            <person name="Yang J."/>
            <person name="Bei W."/>
            <person name="Cai X."/>
            <person name="Chen L."/>
            <person name="Dong J."/>
            <person name="Zhou R."/>
            <person name="Jin M."/>
            <person name="Jin Q."/>
            <person name="Chen H."/>
        </authorList>
    </citation>
    <scope>NUCLEOTIDE SEQUENCE [LARGE SCALE GENOMIC DNA]</scope>
    <source>
        <strain>SH0165</strain>
    </source>
</reference>
<evidence type="ECO:0000255" key="1">
    <source>
        <dbReference type="HAMAP-Rule" id="MF_00182"/>
    </source>
</evidence>
<comment type="function">
    <text evidence="1">Attaches a formyl group to the free amino group of methionyl-tRNA(fMet). The formyl group appears to play a dual role in the initiator identity of N-formylmethionyl-tRNA by promoting its recognition by IF2 and preventing the misappropriation of this tRNA by the elongation apparatus.</text>
</comment>
<comment type="catalytic activity">
    <reaction evidence="1">
        <text>L-methionyl-tRNA(fMet) + (6R)-10-formyltetrahydrofolate = N-formyl-L-methionyl-tRNA(fMet) + (6S)-5,6,7,8-tetrahydrofolate + H(+)</text>
        <dbReference type="Rhea" id="RHEA:24380"/>
        <dbReference type="Rhea" id="RHEA-COMP:9952"/>
        <dbReference type="Rhea" id="RHEA-COMP:9953"/>
        <dbReference type="ChEBI" id="CHEBI:15378"/>
        <dbReference type="ChEBI" id="CHEBI:57453"/>
        <dbReference type="ChEBI" id="CHEBI:78530"/>
        <dbReference type="ChEBI" id="CHEBI:78844"/>
        <dbReference type="ChEBI" id="CHEBI:195366"/>
        <dbReference type="EC" id="2.1.2.9"/>
    </reaction>
</comment>
<comment type="similarity">
    <text evidence="1">Belongs to the Fmt family.</text>
</comment>
<accession>B8F7U6</accession>